<comment type="similarity">
    <text evidence="1">Belongs to the bacterial ribosomal protein bL34 family.</text>
</comment>
<dbReference type="EMBL" id="CP000512">
    <property type="protein sequence ID" value="ABM35327.1"/>
    <property type="molecule type" value="Genomic_DNA"/>
</dbReference>
<dbReference type="RefSeq" id="WP_005798102.1">
    <property type="nucleotide sequence ID" value="NC_008752.1"/>
</dbReference>
<dbReference type="SMR" id="A1TWI9"/>
<dbReference type="STRING" id="397945.Aave_4796"/>
<dbReference type="GeneID" id="84683486"/>
<dbReference type="KEGG" id="aav:Aave_4796"/>
<dbReference type="eggNOG" id="COG0230">
    <property type="taxonomic scope" value="Bacteria"/>
</dbReference>
<dbReference type="HOGENOM" id="CLU_129938_2_0_4"/>
<dbReference type="OrthoDB" id="9804164at2"/>
<dbReference type="Proteomes" id="UP000002596">
    <property type="component" value="Chromosome"/>
</dbReference>
<dbReference type="GO" id="GO:1990904">
    <property type="term" value="C:ribonucleoprotein complex"/>
    <property type="evidence" value="ECO:0007669"/>
    <property type="project" value="UniProtKB-KW"/>
</dbReference>
<dbReference type="GO" id="GO:0005840">
    <property type="term" value="C:ribosome"/>
    <property type="evidence" value="ECO:0007669"/>
    <property type="project" value="UniProtKB-KW"/>
</dbReference>
<dbReference type="GO" id="GO:0003735">
    <property type="term" value="F:structural constituent of ribosome"/>
    <property type="evidence" value="ECO:0007669"/>
    <property type="project" value="InterPro"/>
</dbReference>
<dbReference type="GO" id="GO:0006412">
    <property type="term" value="P:translation"/>
    <property type="evidence" value="ECO:0007669"/>
    <property type="project" value="UniProtKB-UniRule"/>
</dbReference>
<dbReference type="FunFam" id="1.10.287.3980:FF:000001">
    <property type="entry name" value="Mitochondrial ribosomal protein L34"/>
    <property type="match status" value="1"/>
</dbReference>
<dbReference type="Gene3D" id="1.10.287.3980">
    <property type="match status" value="1"/>
</dbReference>
<dbReference type="HAMAP" id="MF_00391">
    <property type="entry name" value="Ribosomal_bL34"/>
    <property type="match status" value="1"/>
</dbReference>
<dbReference type="InterPro" id="IPR000271">
    <property type="entry name" value="Ribosomal_bL34"/>
</dbReference>
<dbReference type="InterPro" id="IPR020939">
    <property type="entry name" value="Ribosomal_bL34_CS"/>
</dbReference>
<dbReference type="NCBIfam" id="TIGR01030">
    <property type="entry name" value="rpmH_bact"/>
    <property type="match status" value="1"/>
</dbReference>
<dbReference type="PANTHER" id="PTHR14503:SF4">
    <property type="entry name" value="LARGE RIBOSOMAL SUBUNIT PROTEIN BL34M"/>
    <property type="match status" value="1"/>
</dbReference>
<dbReference type="PANTHER" id="PTHR14503">
    <property type="entry name" value="MITOCHONDRIAL RIBOSOMAL PROTEIN 34 FAMILY MEMBER"/>
    <property type="match status" value="1"/>
</dbReference>
<dbReference type="Pfam" id="PF00468">
    <property type="entry name" value="Ribosomal_L34"/>
    <property type="match status" value="1"/>
</dbReference>
<dbReference type="PROSITE" id="PS00784">
    <property type="entry name" value="RIBOSOMAL_L34"/>
    <property type="match status" value="1"/>
</dbReference>
<reference key="1">
    <citation type="submission" date="2006-12" db="EMBL/GenBank/DDBJ databases">
        <title>Complete sequence of Acidovorax avenae subsp. citrulli AAC00-1.</title>
        <authorList>
            <person name="Copeland A."/>
            <person name="Lucas S."/>
            <person name="Lapidus A."/>
            <person name="Barry K."/>
            <person name="Detter J.C."/>
            <person name="Glavina del Rio T."/>
            <person name="Dalin E."/>
            <person name="Tice H."/>
            <person name="Pitluck S."/>
            <person name="Kiss H."/>
            <person name="Brettin T."/>
            <person name="Bruce D."/>
            <person name="Han C."/>
            <person name="Tapia R."/>
            <person name="Gilna P."/>
            <person name="Schmutz J."/>
            <person name="Larimer F."/>
            <person name="Land M."/>
            <person name="Hauser L."/>
            <person name="Kyrpides N."/>
            <person name="Kim E."/>
            <person name="Stahl D."/>
            <person name="Richardson P."/>
        </authorList>
    </citation>
    <scope>NUCLEOTIDE SEQUENCE [LARGE SCALE GENOMIC DNA]</scope>
    <source>
        <strain>AAC00-1</strain>
    </source>
</reference>
<name>RL34_PARC0</name>
<feature type="chain" id="PRO_1000013261" description="Large ribosomal subunit protein bL34">
    <location>
        <begin position="1"/>
        <end position="44"/>
    </location>
</feature>
<protein>
    <recommendedName>
        <fullName evidence="1">Large ribosomal subunit protein bL34</fullName>
    </recommendedName>
    <alternativeName>
        <fullName evidence="2">50S ribosomal protein L34</fullName>
    </alternativeName>
</protein>
<proteinExistence type="inferred from homology"/>
<accession>A1TWI9</accession>
<organism>
    <name type="scientific">Paracidovorax citrulli (strain AAC00-1)</name>
    <name type="common">Acidovorax citrulli</name>
    <dbReference type="NCBI Taxonomy" id="397945"/>
    <lineage>
        <taxon>Bacteria</taxon>
        <taxon>Pseudomonadati</taxon>
        <taxon>Pseudomonadota</taxon>
        <taxon>Betaproteobacteria</taxon>
        <taxon>Burkholderiales</taxon>
        <taxon>Comamonadaceae</taxon>
        <taxon>Paracidovorax</taxon>
    </lineage>
</organism>
<sequence length="44" mass="5138">MKRTYQPSKTRRARTHGFLVRMKTRGGRAVINARRAKGRKRLAV</sequence>
<gene>
    <name evidence="1" type="primary">rpmH</name>
    <name type="ordered locus">Aave_4796</name>
</gene>
<keyword id="KW-0687">Ribonucleoprotein</keyword>
<keyword id="KW-0689">Ribosomal protein</keyword>
<evidence type="ECO:0000255" key="1">
    <source>
        <dbReference type="HAMAP-Rule" id="MF_00391"/>
    </source>
</evidence>
<evidence type="ECO:0000305" key="2"/>